<dbReference type="EMBL" id="CP000151">
    <property type="protein sequence ID" value="ABB07038.1"/>
    <property type="molecule type" value="Genomic_DNA"/>
</dbReference>
<dbReference type="RefSeq" id="WP_011350667.1">
    <property type="nucleotide sequence ID" value="NC_007510.1"/>
</dbReference>
<dbReference type="SMR" id="Q39KH8"/>
<dbReference type="GeneID" id="45093353"/>
<dbReference type="KEGG" id="bur:Bcep18194_A3436"/>
<dbReference type="PATRIC" id="fig|482957.22.peg.276"/>
<dbReference type="HOGENOM" id="CLU_062853_0_0_4"/>
<dbReference type="Proteomes" id="UP000002705">
    <property type="component" value="Chromosome 1"/>
</dbReference>
<dbReference type="GO" id="GO:0022625">
    <property type="term" value="C:cytosolic large ribosomal subunit"/>
    <property type="evidence" value="ECO:0007669"/>
    <property type="project" value="TreeGrafter"/>
</dbReference>
<dbReference type="GO" id="GO:0019843">
    <property type="term" value="F:rRNA binding"/>
    <property type="evidence" value="ECO:0007669"/>
    <property type="project" value="UniProtKB-UniRule"/>
</dbReference>
<dbReference type="GO" id="GO:0003735">
    <property type="term" value="F:structural constituent of ribosome"/>
    <property type="evidence" value="ECO:0007669"/>
    <property type="project" value="InterPro"/>
</dbReference>
<dbReference type="GO" id="GO:0000049">
    <property type="term" value="F:tRNA binding"/>
    <property type="evidence" value="ECO:0007669"/>
    <property type="project" value="UniProtKB-KW"/>
</dbReference>
<dbReference type="GO" id="GO:0006417">
    <property type="term" value="P:regulation of translation"/>
    <property type="evidence" value="ECO:0007669"/>
    <property type="project" value="UniProtKB-KW"/>
</dbReference>
<dbReference type="GO" id="GO:0006412">
    <property type="term" value="P:translation"/>
    <property type="evidence" value="ECO:0007669"/>
    <property type="project" value="UniProtKB-UniRule"/>
</dbReference>
<dbReference type="CDD" id="cd00403">
    <property type="entry name" value="Ribosomal_L1"/>
    <property type="match status" value="1"/>
</dbReference>
<dbReference type="FunFam" id="3.40.50.790:FF:000001">
    <property type="entry name" value="50S ribosomal protein L1"/>
    <property type="match status" value="1"/>
</dbReference>
<dbReference type="Gene3D" id="3.30.190.20">
    <property type="match status" value="1"/>
</dbReference>
<dbReference type="Gene3D" id="3.40.50.790">
    <property type="match status" value="1"/>
</dbReference>
<dbReference type="HAMAP" id="MF_01318_B">
    <property type="entry name" value="Ribosomal_uL1_B"/>
    <property type="match status" value="1"/>
</dbReference>
<dbReference type="InterPro" id="IPR005878">
    <property type="entry name" value="Ribosom_uL1_bac-type"/>
</dbReference>
<dbReference type="InterPro" id="IPR002143">
    <property type="entry name" value="Ribosomal_uL1"/>
</dbReference>
<dbReference type="InterPro" id="IPR023674">
    <property type="entry name" value="Ribosomal_uL1-like"/>
</dbReference>
<dbReference type="InterPro" id="IPR028364">
    <property type="entry name" value="Ribosomal_uL1/biogenesis"/>
</dbReference>
<dbReference type="InterPro" id="IPR016095">
    <property type="entry name" value="Ribosomal_uL1_3-a/b-sand"/>
</dbReference>
<dbReference type="InterPro" id="IPR023673">
    <property type="entry name" value="Ribosomal_uL1_CS"/>
</dbReference>
<dbReference type="NCBIfam" id="TIGR01169">
    <property type="entry name" value="rplA_bact"/>
    <property type="match status" value="1"/>
</dbReference>
<dbReference type="PANTHER" id="PTHR36427">
    <property type="entry name" value="54S RIBOSOMAL PROTEIN L1, MITOCHONDRIAL"/>
    <property type="match status" value="1"/>
</dbReference>
<dbReference type="PANTHER" id="PTHR36427:SF3">
    <property type="entry name" value="LARGE RIBOSOMAL SUBUNIT PROTEIN UL1M"/>
    <property type="match status" value="1"/>
</dbReference>
<dbReference type="Pfam" id="PF00687">
    <property type="entry name" value="Ribosomal_L1"/>
    <property type="match status" value="1"/>
</dbReference>
<dbReference type="PIRSF" id="PIRSF002155">
    <property type="entry name" value="Ribosomal_L1"/>
    <property type="match status" value="1"/>
</dbReference>
<dbReference type="SUPFAM" id="SSF56808">
    <property type="entry name" value="Ribosomal protein L1"/>
    <property type="match status" value="1"/>
</dbReference>
<dbReference type="PROSITE" id="PS01199">
    <property type="entry name" value="RIBOSOMAL_L1"/>
    <property type="match status" value="1"/>
</dbReference>
<reference key="1">
    <citation type="submission" date="2005-10" db="EMBL/GenBank/DDBJ databases">
        <title>Complete sequence of chromosome 1 of Burkholderia sp. 383.</title>
        <authorList>
            <consortium name="US DOE Joint Genome Institute"/>
            <person name="Copeland A."/>
            <person name="Lucas S."/>
            <person name="Lapidus A."/>
            <person name="Barry K."/>
            <person name="Detter J.C."/>
            <person name="Glavina T."/>
            <person name="Hammon N."/>
            <person name="Israni S."/>
            <person name="Pitluck S."/>
            <person name="Chain P."/>
            <person name="Malfatti S."/>
            <person name="Shin M."/>
            <person name="Vergez L."/>
            <person name="Schmutz J."/>
            <person name="Larimer F."/>
            <person name="Land M."/>
            <person name="Kyrpides N."/>
            <person name="Lykidis A."/>
            <person name="Richardson P."/>
        </authorList>
    </citation>
    <scope>NUCLEOTIDE SEQUENCE [LARGE SCALE GENOMIC DNA]</scope>
    <source>
        <strain>ATCC 17760 / DSM 23089 / LMG 22485 / NCIMB 9086 / R18194 / 383</strain>
    </source>
</reference>
<name>RL1_BURL3</name>
<comment type="function">
    <text evidence="1">Binds directly to 23S rRNA. The L1 stalk is quite mobile in the ribosome, and is involved in E site tRNA release.</text>
</comment>
<comment type="function">
    <text evidence="1">Protein L1 is also a translational repressor protein, it controls the translation of the L11 operon by binding to its mRNA.</text>
</comment>
<comment type="subunit">
    <text evidence="1">Part of the 50S ribosomal subunit.</text>
</comment>
<comment type="similarity">
    <text evidence="1">Belongs to the universal ribosomal protein uL1 family.</text>
</comment>
<accession>Q39KH8</accession>
<evidence type="ECO:0000255" key="1">
    <source>
        <dbReference type="HAMAP-Rule" id="MF_01318"/>
    </source>
</evidence>
<evidence type="ECO:0000305" key="2"/>
<organism>
    <name type="scientific">Burkholderia lata (strain ATCC 17760 / DSM 23089 / LMG 22485 / NCIMB 9086 / R18194 / 383)</name>
    <dbReference type="NCBI Taxonomy" id="482957"/>
    <lineage>
        <taxon>Bacteria</taxon>
        <taxon>Pseudomonadati</taxon>
        <taxon>Pseudomonadota</taxon>
        <taxon>Betaproteobacteria</taxon>
        <taxon>Burkholderiales</taxon>
        <taxon>Burkholderiaceae</taxon>
        <taxon>Burkholderia</taxon>
        <taxon>Burkholderia cepacia complex</taxon>
    </lineage>
</organism>
<sequence length="232" mass="24353">MAKISKRRQAFAAKVDRQKLYAIEEALSLVKECASAKFDESIDVAVQLGIDAKKSDQVVRGSVVLPAGTGKSVRVAVFAQGEKAEQARAAGAEIVGMEDLAEQIKAGQMDFDIVIASPDTMRIVGTLGQILGPRGLMPNPKVGTVTPDVATAVKNAKAGQVQFRVDKAGIIHATIGRASFEPTALRSNLSALIEALQKAKPATSKGVYLRKIALSSTMGVGVRVDQGTLAAQ</sequence>
<protein>
    <recommendedName>
        <fullName evidence="1">Large ribosomal subunit protein uL1</fullName>
    </recommendedName>
    <alternativeName>
        <fullName evidence="2">50S ribosomal protein L1</fullName>
    </alternativeName>
</protein>
<feature type="chain" id="PRO_0000230596" description="Large ribosomal subunit protein uL1">
    <location>
        <begin position="1"/>
        <end position="232"/>
    </location>
</feature>
<gene>
    <name evidence="1" type="primary">rplA</name>
    <name type="ordered locus">Bcep18194_A3436</name>
</gene>
<proteinExistence type="inferred from homology"/>
<keyword id="KW-0678">Repressor</keyword>
<keyword id="KW-0687">Ribonucleoprotein</keyword>
<keyword id="KW-0689">Ribosomal protein</keyword>
<keyword id="KW-0694">RNA-binding</keyword>
<keyword id="KW-0699">rRNA-binding</keyword>
<keyword id="KW-0810">Translation regulation</keyword>
<keyword id="KW-0820">tRNA-binding</keyword>